<keyword id="KW-1003">Cell membrane</keyword>
<keyword id="KW-0225">Disease variant</keyword>
<keyword id="KW-0887">Epilepsy</keyword>
<keyword id="KW-0472">Membrane</keyword>
<keyword id="KW-1267">Proteomics identification</keyword>
<keyword id="KW-1185">Reference proteome</keyword>
<keyword id="KW-0732">Signal</keyword>
<keyword id="KW-0770">Synapse</keyword>
<keyword id="KW-0812">Transmembrane</keyword>
<keyword id="KW-1133">Transmembrane helix</keyword>
<feature type="signal peptide" evidence="2">
    <location>
        <begin position="1"/>
        <end position="28"/>
    </location>
</feature>
<feature type="chain" id="PRO_0000228720" description="DOMON domain-containing protein FRRS1L" evidence="2">
    <location>
        <begin position="29"/>
        <end position="293"/>
    </location>
</feature>
<feature type="transmembrane region" description="Helical" evidence="2">
    <location>
        <begin position="271"/>
        <end position="291"/>
    </location>
</feature>
<feature type="domain" description="DOMON" evidence="3">
    <location>
        <begin position="119"/>
        <end position="234"/>
    </location>
</feature>
<feature type="region of interest" description="Disordered" evidence="4">
    <location>
        <begin position="29"/>
        <end position="61"/>
    </location>
</feature>
<feature type="compositionally biased region" description="Basic and acidic residues" evidence="4">
    <location>
        <begin position="46"/>
        <end position="61"/>
    </location>
</feature>
<feature type="sequence variant" id="VAR_077052" description="In DEE37." evidence="6">
    <location>
        <position position="195"/>
    </location>
</feature>
<reference key="1">
    <citation type="journal article" date="2000" name="Mamm. Genome">
        <title>Cloning, mapping, and expression of a novel brain-specific transcript in the familial dysautonomia candidate region on chromosome 9q31.</title>
        <authorList>
            <person name="Chadwick B.P."/>
            <person name="Leyne M."/>
            <person name="Gill S."/>
            <person name="Liebert C.B."/>
            <person name="Mull J."/>
            <person name="Mezey E."/>
            <person name="Robbins C.M."/>
            <person name="Pinkett H.W."/>
            <person name="Makalowska I."/>
            <person name="Maayan C."/>
            <person name="Blumenfeld A."/>
            <person name="Axelrod F.B."/>
            <person name="Brownstein M."/>
            <person name="Gusella J.F."/>
            <person name="Slaugenhaupt S.A."/>
        </authorList>
    </citation>
    <scope>NUCLEOTIDE SEQUENCE [MRNA]</scope>
    <scope>TISSUE SPECIFICITY</scope>
</reference>
<reference key="2">
    <citation type="journal article" date="2004" name="Nature">
        <title>DNA sequence and analysis of human chromosome 9.</title>
        <authorList>
            <person name="Humphray S.J."/>
            <person name="Oliver K."/>
            <person name="Hunt A.R."/>
            <person name="Plumb R.W."/>
            <person name="Loveland J.E."/>
            <person name="Howe K.L."/>
            <person name="Andrews T.D."/>
            <person name="Searle S."/>
            <person name="Hunt S.E."/>
            <person name="Scott C.E."/>
            <person name="Jones M.C."/>
            <person name="Ainscough R."/>
            <person name="Almeida J.P."/>
            <person name="Ambrose K.D."/>
            <person name="Ashwell R.I.S."/>
            <person name="Babbage A.K."/>
            <person name="Babbage S."/>
            <person name="Bagguley C.L."/>
            <person name="Bailey J."/>
            <person name="Banerjee R."/>
            <person name="Barker D.J."/>
            <person name="Barlow K.F."/>
            <person name="Bates K."/>
            <person name="Beasley H."/>
            <person name="Beasley O."/>
            <person name="Bird C.P."/>
            <person name="Bray-Allen S."/>
            <person name="Brown A.J."/>
            <person name="Brown J.Y."/>
            <person name="Burford D."/>
            <person name="Burrill W."/>
            <person name="Burton J."/>
            <person name="Carder C."/>
            <person name="Carter N.P."/>
            <person name="Chapman J.C."/>
            <person name="Chen Y."/>
            <person name="Clarke G."/>
            <person name="Clark S.Y."/>
            <person name="Clee C.M."/>
            <person name="Clegg S."/>
            <person name="Collier R.E."/>
            <person name="Corby N."/>
            <person name="Crosier M."/>
            <person name="Cummings A.T."/>
            <person name="Davies J."/>
            <person name="Dhami P."/>
            <person name="Dunn M."/>
            <person name="Dutta I."/>
            <person name="Dyer L.W."/>
            <person name="Earthrowl M.E."/>
            <person name="Faulkner L."/>
            <person name="Fleming C.J."/>
            <person name="Frankish A."/>
            <person name="Frankland J.A."/>
            <person name="French L."/>
            <person name="Fricker D.G."/>
            <person name="Garner P."/>
            <person name="Garnett J."/>
            <person name="Ghori J."/>
            <person name="Gilbert J.G.R."/>
            <person name="Glison C."/>
            <person name="Grafham D.V."/>
            <person name="Gribble S."/>
            <person name="Griffiths C."/>
            <person name="Griffiths-Jones S."/>
            <person name="Grocock R."/>
            <person name="Guy J."/>
            <person name="Hall R.E."/>
            <person name="Hammond S."/>
            <person name="Harley J.L."/>
            <person name="Harrison E.S.I."/>
            <person name="Hart E.A."/>
            <person name="Heath P.D."/>
            <person name="Henderson C.D."/>
            <person name="Hopkins B.L."/>
            <person name="Howard P.J."/>
            <person name="Howden P.J."/>
            <person name="Huckle E."/>
            <person name="Johnson C."/>
            <person name="Johnson D."/>
            <person name="Joy A.A."/>
            <person name="Kay M."/>
            <person name="Keenan S."/>
            <person name="Kershaw J.K."/>
            <person name="Kimberley A.M."/>
            <person name="King A."/>
            <person name="Knights A."/>
            <person name="Laird G.K."/>
            <person name="Langford C."/>
            <person name="Lawlor S."/>
            <person name="Leongamornlert D.A."/>
            <person name="Leversha M."/>
            <person name="Lloyd C."/>
            <person name="Lloyd D.M."/>
            <person name="Lovell J."/>
            <person name="Martin S."/>
            <person name="Mashreghi-Mohammadi M."/>
            <person name="Matthews L."/>
            <person name="McLaren S."/>
            <person name="McLay K.E."/>
            <person name="McMurray A."/>
            <person name="Milne S."/>
            <person name="Nickerson T."/>
            <person name="Nisbett J."/>
            <person name="Nordsiek G."/>
            <person name="Pearce A.V."/>
            <person name="Peck A.I."/>
            <person name="Porter K.M."/>
            <person name="Pandian R."/>
            <person name="Pelan S."/>
            <person name="Phillimore B."/>
            <person name="Povey S."/>
            <person name="Ramsey Y."/>
            <person name="Rand V."/>
            <person name="Scharfe M."/>
            <person name="Sehra H.K."/>
            <person name="Shownkeen R."/>
            <person name="Sims S.K."/>
            <person name="Skuce C.D."/>
            <person name="Smith M."/>
            <person name="Steward C.A."/>
            <person name="Swarbreck D."/>
            <person name="Sycamore N."/>
            <person name="Tester J."/>
            <person name="Thorpe A."/>
            <person name="Tracey A."/>
            <person name="Tromans A."/>
            <person name="Thomas D.W."/>
            <person name="Wall M."/>
            <person name="Wallis J.M."/>
            <person name="West A.P."/>
            <person name="Whitehead S.L."/>
            <person name="Willey D.L."/>
            <person name="Williams S.A."/>
            <person name="Wilming L."/>
            <person name="Wray P.W."/>
            <person name="Young L."/>
            <person name="Ashurst J.L."/>
            <person name="Coulson A."/>
            <person name="Blocker H."/>
            <person name="Durbin R.M."/>
            <person name="Sulston J.E."/>
            <person name="Hubbard T."/>
            <person name="Jackson M.J."/>
            <person name="Bentley D.R."/>
            <person name="Beck S."/>
            <person name="Rogers J."/>
            <person name="Dunham I."/>
        </authorList>
    </citation>
    <scope>NUCLEOTIDE SEQUENCE [LARGE SCALE GENOMIC DNA]</scope>
</reference>
<reference key="3">
    <citation type="journal article" date="2016" name="Am. J. Hum. Genet.">
        <title>Loss-of-function mutations in FRRS1L lead to an epileptic-dyskinetic encephalopathy.</title>
        <authorList>
            <person name="Madeo M."/>
            <person name="Stewart M."/>
            <person name="Sun Y."/>
            <person name="Sahir N."/>
            <person name="Wiethoff S."/>
            <person name="Chandrasekar I."/>
            <person name="Yarrow A."/>
            <person name="Rosenfeld J.A."/>
            <person name="Yang Y."/>
            <person name="Cordeiro D."/>
            <person name="McCormick E.M."/>
            <person name="Muraresku C.C."/>
            <person name="Jepperson T.N."/>
            <person name="McBeth L.J."/>
            <person name="Seidahmed M.Z."/>
            <person name="El Khashab H.Y."/>
            <person name="Hamad M."/>
            <person name="Azzedine H."/>
            <person name="Clark K."/>
            <person name="Corrochano S."/>
            <person name="Wells S."/>
            <person name="Elting M.W."/>
            <person name="Weiss M.M."/>
            <person name="Burn S."/>
            <person name="Myers A."/>
            <person name="Landsverk M."/>
            <person name="Crotwell P.L."/>
            <person name="Waisfisz Q."/>
            <person name="Wolf N.I."/>
            <person name="Nolan P.M."/>
            <person name="Padilla-Lopez S."/>
            <person name="Houlden H."/>
            <person name="Lifton R."/>
            <person name="Mane S."/>
            <person name="Singh B.B."/>
            <person name="Falk M.J."/>
            <person name="Mercimek-Mahmutoglu S."/>
            <person name="Bilguvar K."/>
            <person name="Salih M.A."/>
            <person name="Acevedo-Arozena A."/>
            <person name="Kruer M.C."/>
        </authorList>
    </citation>
    <scope>FUNCTION</scope>
    <scope>INVOLVEMENT IN DEE37</scope>
    <scope>VARIANT DEE37 GLY-195 DEL</scope>
</reference>
<reference key="4">
    <citation type="journal article" date="2016" name="Clin. Genet.">
        <title>Epileptic encephalopathy with continuous spike-and-wave during sleep maps to a homozygous truncating mutation in AMPA receptor component FRRS1L.</title>
        <authorList>
            <person name="Shaheen R."/>
            <person name="Al Tala S."/>
            <person name="Ewida N."/>
            <person name="Abouelhoda M."/>
            <person name="Alkuraya F.S."/>
        </authorList>
    </citation>
    <scope>INVOLVEMENT IN DEE37</scope>
</reference>
<protein>
    <recommendedName>
        <fullName>DOMON domain-containing protein FRRS1L</fullName>
    </recommendedName>
    <alternativeName>
        <fullName>Brain protein CG-6</fullName>
    </alternativeName>
    <alternativeName>
        <fullName>Ferric-chelate reductase 1-like protein</fullName>
    </alternativeName>
</protein>
<accession>Q9P0K9</accession>
<accession>Q5T4G4</accession>
<comment type="function">
    <text evidence="6">Important modulator of glutamate signaling pathway.</text>
</comment>
<comment type="subunit">
    <text evidence="1">Component of the outer core of AMPAR complex. AMPAR complex consists of an inner core made of 4 pore-forming GluA/GRIA proteins (GRIA1, GRIA2, GRIA3 and GRIA4) and 4 major auxiliary subunits arranged in a twofold symmetry. One of the two pairs of distinct binding sites is occupied either by CNIH2, CNIH3 or CACNG2, CACNG3. The other harbors CACNG2, CACNG3, CACNG4, CACNG8 or GSG1L. This inner core of AMPAR complex is complemented by outer core constituents binding directly to the GluA/GRIA proteins at sites distinct from the interaction sites of the inner core constituents. Outer core constituents include at least PRRT1, PRRT2, CKAMP44/SHISA9, FRRS1L and NRN1. The proteins of the inner and outer core serve as a platform for other, more peripherally associated AMPAR constituents. Alone or in combination, these auxiliary subunits control the gating and pharmacology of the AMPAR complex and profoundly impact their biogenesis and protein processing (By similarity).</text>
</comment>
<comment type="subcellular location">
    <subcellularLocation>
        <location evidence="1">Cell membrane</location>
    </subcellularLocation>
    <subcellularLocation>
        <location evidence="1">Synapse</location>
    </subcellularLocation>
</comment>
<comment type="tissue specificity">
    <text evidence="5">Expressed in adult and fetal brain. Very weak expression in medulla, spinal cord and in adult ovary.</text>
</comment>
<comment type="disease" evidence="6 7">
    <disease id="DI-04748">
        <name>Developmental and epileptic encephalopathy 37</name>
        <acronym>DEE37</acronym>
        <description>A form of epileptic encephalopathy, a heterogeneous group of severe early-onset epilepsies characterized by refractory seizures, neurodevelopmental impairment, and poor prognosis. Development is normal prior to seizure onset, after which cognitive and motor delays become apparent. DEE37 is an autosomal recessive, severe form manifesting in the first years of life. Affected individuals show hyperkinetic movement disorder with choreoathetosis, spasticity, rigidity, intellectual disability, absent speech, and impaired volitional movements.</description>
        <dbReference type="MIM" id="616981"/>
    </disease>
    <text>The disease is caused by variants affecting the gene represented in this entry.</text>
</comment>
<comment type="caution">
    <text evidence="8">Named FRRS1L by HGNC because it shares limited sequence similarity with FRRS1. However, sequence similarities lie outside of the reductase region, suggesting it has no oxidoreductase activity.</text>
</comment>
<comment type="sequence caution" evidence="8">
    <conflict type="erroneous initiation">
        <sequence resource="EMBL-CDS" id="AAF28159"/>
    </conflict>
    <text>Extended N-terminus.</text>
</comment>
<proteinExistence type="evidence at protein level"/>
<evidence type="ECO:0000250" key="1">
    <source>
        <dbReference type="UniProtKB" id="B1AXV0"/>
    </source>
</evidence>
<evidence type="ECO:0000255" key="2"/>
<evidence type="ECO:0000255" key="3">
    <source>
        <dbReference type="PROSITE-ProRule" id="PRU00246"/>
    </source>
</evidence>
<evidence type="ECO:0000256" key="4">
    <source>
        <dbReference type="SAM" id="MobiDB-lite"/>
    </source>
</evidence>
<evidence type="ECO:0000269" key="5">
    <source>
    </source>
</evidence>
<evidence type="ECO:0000269" key="6">
    <source>
    </source>
</evidence>
<evidence type="ECO:0000269" key="7">
    <source>
    </source>
</evidence>
<evidence type="ECO:0000305" key="8"/>
<dbReference type="EMBL" id="AF155065">
    <property type="protein sequence ID" value="AAF28159.1"/>
    <property type="status" value="ALT_INIT"/>
    <property type="molecule type" value="mRNA"/>
</dbReference>
<dbReference type="EMBL" id="AL358815">
    <property type="status" value="NOT_ANNOTATED_CDS"/>
    <property type="molecule type" value="Genomic_DNA"/>
</dbReference>
<dbReference type="CCDS" id="CCDS35098.2"/>
<dbReference type="RefSeq" id="NP_055149.3">
    <property type="nucleotide sequence ID" value="NM_014334.4"/>
</dbReference>
<dbReference type="BioGRID" id="117238">
    <property type="interactions" value="1"/>
</dbReference>
<dbReference type="FunCoup" id="Q9P0K9">
    <property type="interactions" value="6"/>
</dbReference>
<dbReference type="IntAct" id="Q9P0K9">
    <property type="interactions" value="1"/>
</dbReference>
<dbReference type="STRING" id="9606.ENSP00000477141"/>
<dbReference type="GlyGen" id="Q9P0K9">
    <property type="glycosylation" value="1 site"/>
</dbReference>
<dbReference type="iPTMnet" id="Q9P0K9"/>
<dbReference type="PhosphoSitePlus" id="Q9P0K9"/>
<dbReference type="SwissPalm" id="Q9P0K9"/>
<dbReference type="BioMuta" id="FRRS1L"/>
<dbReference type="DMDM" id="90111980"/>
<dbReference type="MassIVE" id="Q9P0K9"/>
<dbReference type="PaxDb" id="9606-ENSP00000477141"/>
<dbReference type="PeptideAtlas" id="Q9P0K9"/>
<dbReference type="ProteomicsDB" id="83566"/>
<dbReference type="Antibodypedia" id="71944">
    <property type="antibodies" value="67 antibodies from 16 providers"/>
</dbReference>
<dbReference type="DNASU" id="23732"/>
<dbReference type="Ensembl" id="ENST00000561981.5">
    <property type="protein sequence ID" value="ENSP00000477141.2"/>
    <property type="gene ID" value="ENSG00000260230.5"/>
</dbReference>
<dbReference type="GeneID" id="23732"/>
<dbReference type="KEGG" id="hsa:23732"/>
<dbReference type="MANE-Select" id="ENST00000561981.5">
    <property type="protein sequence ID" value="ENSP00000477141.2"/>
    <property type="RefSeq nucleotide sequence ID" value="NM_014334.4"/>
    <property type="RefSeq protein sequence ID" value="NP_055149.3"/>
</dbReference>
<dbReference type="UCSC" id="uc004bdv.4">
    <property type="organism name" value="human"/>
</dbReference>
<dbReference type="AGR" id="HGNC:1362"/>
<dbReference type="CTD" id="23732"/>
<dbReference type="DisGeNET" id="23732"/>
<dbReference type="GeneCards" id="FRRS1L"/>
<dbReference type="HGNC" id="HGNC:1362">
    <property type="gene designation" value="FRRS1L"/>
</dbReference>
<dbReference type="HPA" id="ENSG00000260230">
    <property type="expression patterns" value="Tissue enhanced (brain)"/>
</dbReference>
<dbReference type="MalaCards" id="FRRS1L"/>
<dbReference type="MIM" id="604574">
    <property type="type" value="gene"/>
</dbReference>
<dbReference type="MIM" id="616981">
    <property type="type" value="phenotype"/>
</dbReference>
<dbReference type="neXtProt" id="NX_Q9P0K9"/>
<dbReference type="OpenTargets" id="ENSG00000260230"/>
<dbReference type="Orphanet" id="88616">
    <property type="disease" value="Autosomal recessive non-syndromic intellectual disability"/>
</dbReference>
<dbReference type="Orphanet" id="725">
    <property type="disease" value="Developmental and epileptic encephalopathy with spike-wave activation in sleep"/>
</dbReference>
<dbReference type="PharmGKB" id="PA25979"/>
<dbReference type="VEuPathDB" id="HostDB:ENSG00000260230"/>
<dbReference type="eggNOG" id="KOG4293">
    <property type="taxonomic scope" value="Eukaryota"/>
</dbReference>
<dbReference type="GeneTree" id="ENSGT00940000159043"/>
<dbReference type="HOGENOM" id="CLU_069383_0_0_1"/>
<dbReference type="InParanoid" id="Q9P0K9"/>
<dbReference type="OMA" id="DAETCEY"/>
<dbReference type="OrthoDB" id="6418377at2759"/>
<dbReference type="PAN-GO" id="Q9P0K9">
    <property type="GO annotations" value="2 GO annotations based on evolutionary models"/>
</dbReference>
<dbReference type="PhylomeDB" id="Q9P0K9"/>
<dbReference type="TreeFam" id="TF316169"/>
<dbReference type="PathwayCommons" id="Q9P0K9"/>
<dbReference type="SignaLink" id="Q9P0K9"/>
<dbReference type="BioGRID-ORCS" id="23732">
    <property type="hits" value="10 hits in 1133 CRISPR screens"/>
</dbReference>
<dbReference type="ChiTaRS" id="FRRS1L">
    <property type="organism name" value="human"/>
</dbReference>
<dbReference type="GenomeRNAi" id="23732"/>
<dbReference type="Pharos" id="Q9P0K9">
    <property type="development level" value="Tbio"/>
</dbReference>
<dbReference type="PRO" id="PR:Q9P0K9"/>
<dbReference type="Proteomes" id="UP000005640">
    <property type="component" value="Chromosome 9"/>
</dbReference>
<dbReference type="RNAct" id="Q9P0K9">
    <property type="molecule type" value="protein"/>
</dbReference>
<dbReference type="Bgee" id="ENSG00000260230">
    <property type="expression patterns" value="Expressed in middle temporal gyrus and 140 other cell types or tissues"/>
</dbReference>
<dbReference type="ExpressionAtlas" id="Q9P0K9">
    <property type="expression patterns" value="baseline and differential"/>
</dbReference>
<dbReference type="GO" id="GO:0005789">
    <property type="term" value="C:endoplasmic reticulum membrane"/>
    <property type="evidence" value="ECO:0007669"/>
    <property type="project" value="Ensembl"/>
</dbReference>
<dbReference type="GO" id="GO:0005886">
    <property type="term" value="C:plasma membrane"/>
    <property type="evidence" value="ECO:0007669"/>
    <property type="project" value="UniProtKB-SubCell"/>
</dbReference>
<dbReference type="GO" id="GO:0098794">
    <property type="term" value="C:postsynapse"/>
    <property type="evidence" value="ECO:0007669"/>
    <property type="project" value="Ensembl"/>
</dbReference>
<dbReference type="GO" id="GO:0045505">
    <property type="term" value="F:dynein intermediate chain binding"/>
    <property type="evidence" value="ECO:0007669"/>
    <property type="project" value="Ensembl"/>
</dbReference>
<dbReference type="GO" id="GO:0044877">
    <property type="term" value="F:protein-containing complex binding"/>
    <property type="evidence" value="ECO:0007669"/>
    <property type="project" value="Ensembl"/>
</dbReference>
<dbReference type="GO" id="GO:1904717">
    <property type="term" value="P:regulation of AMPA glutamate receptor clustering"/>
    <property type="evidence" value="ECO:0007669"/>
    <property type="project" value="Ensembl"/>
</dbReference>
<dbReference type="GO" id="GO:1900449">
    <property type="term" value="P:regulation of glutamate receptor signaling pathway"/>
    <property type="evidence" value="ECO:0000315"/>
    <property type="project" value="UniProtKB"/>
</dbReference>
<dbReference type="GO" id="GO:0099072">
    <property type="term" value="P:regulation of postsynaptic membrane neurotransmitter receptor levels"/>
    <property type="evidence" value="ECO:0000318"/>
    <property type="project" value="GO_Central"/>
</dbReference>
<dbReference type="GO" id="GO:0051966">
    <property type="term" value="P:regulation of synaptic transmission, glutamatergic"/>
    <property type="evidence" value="ECO:0007669"/>
    <property type="project" value="Ensembl"/>
</dbReference>
<dbReference type="CDD" id="cd09628">
    <property type="entry name" value="DOMON_SDR_2_like"/>
    <property type="match status" value="1"/>
</dbReference>
<dbReference type="InterPro" id="IPR005018">
    <property type="entry name" value="DOMON_domain"/>
</dbReference>
<dbReference type="InterPro" id="IPR042789">
    <property type="entry name" value="FRRS1L"/>
</dbReference>
<dbReference type="PANTHER" id="PTHR46902">
    <property type="entry name" value="DOMON DOMAIN-CONTAINING PROTEIN FRRS1L"/>
    <property type="match status" value="1"/>
</dbReference>
<dbReference type="PANTHER" id="PTHR46902:SF1">
    <property type="entry name" value="DOMON DOMAIN-CONTAINING PROTEIN FRRS1L"/>
    <property type="match status" value="1"/>
</dbReference>
<dbReference type="Pfam" id="PF03351">
    <property type="entry name" value="DOMON"/>
    <property type="match status" value="1"/>
</dbReference>
<dbReference type="SMART" id="SM00664">
    <property type="entry name" value="DoH"/>
    <property type="match status" value="1"/>
</dbReference>
<dbReference type="PROSITE" id="PS50836">
    <property type="entry name" value="DOMON"/>
    <property type="match status" value="1"/>
</dbReference>
<organism>
    <name type="scientific">Homo sapiens</name>
    <name type="common">Human</name>
    <dbReference type="NCBI Taxonomy" id="9606"/>
    <lineage>
        <taxon>Eukaryota</taxon>
        <taxon>Metazoa</taxon>
        <taxon>Chordata</taxon>
        <taxon>Craniata</taxon>
        <taxon>Vertebrata</taxon>
        <taxon>Euteleostomi</taxon>
        <taxon>Mammalia</taxon>
        <taxon>Eutheria</taxon>
        <taxon>Euarchontoglires</taxon>
        <taxon>Primates</taxon>
        <taxon>Haplorrhini</taxon>
        <taxon>Catarrhini</taxon>
        <taxon>Hominidae</taxon>
        <taxon>Homo</taxon>
    </lineage>
</organism>
<name>FRS1L_HUMAN</name>
<sequence>MARPPRQHPGVWASLLLLLLTGPAACAASPADDGAGPGGRGPRGRARGDTGADEAVPRHDSSYGTFAGEFYDLRYLSEEGYPFPTAPPVDPFAKIKVDDCGKTKGCFRYGKPGCNAETCDYFLSYRMIGADVEFELSADTDGWVAVGFSSDKKMGGDDVMACVHDDNGRVRIQHFYNVGQWAKEIQRNPARDEEGVFENNRVTCRFKRPVNVPRDETIVDLHLSWYYLFAWGPAIQGSITRHDIDSPPASERVVSIYKYEDIFMPSAAYQTFSSPFCLLLIVALTFYLLMGTP</sequence>
<gene>
    <name type="primary">FRRS1L</name>
    <name type="synonym">C9orf4</name>
</gene>